<gene>
    <name type="primary">TPK1</name>
</gene>
<dbReference type="EC" id="2.7.6.-" evidence="1"/>
<dbReference type="EMBL" id="BT020836">
    <property type="protein sequence ID" value="AAX08853.1"/>
    <property type="molecule type" value="mRNA"/>
</dbReference>
<dbReference type="EMBL" id="BC119895">
    <property type="protein sequence ID" value="AAI19896.1"/>
    <property type="molecule type" value="mRNA"/>
</dbReference>
<dbReference type="RefSeq" id="NP_001073839.1">
    <property type="nucleotide sequence ID" value="NM_001080370.1"/>
</dbReference>
<dbReference type="RefSeq" id="XP_005205956.1">
    <property type="nucleotide sequence ID" value="XM_005205899.3"/>
</dbReference>
<dbReference type="RefSeq" id="XP_024846702.1">
    <property type="nucleotide sequence ID" value="XM_024990934.2"/>
</dbReference>
<dbReference type="SMR" id="Q5E9T4"/>
<dbReference type="FunCoup" id="Q5E9T4">
    <property type="interactions" value="1357"/>
</dbReference>
<dbReference type="STRING" id="9913.ENSBTAP00000074589"/>
<dbReference type="PaxDb" id="9913-ENSBTAP00000023510"/>
<dbReference type="Ensembl" id="ENSBTAT00000044036.2">
    <property type="protein sequence ID" value="ENSBTAP00000041553.1"/>
    <property type="gene ID" value="ENSBTAG00000017676.5"/>
</dbReference>
<dbReference type="GeneID" id="788066"/>
<dbReference type="KEGG" id="bta:788066"/>
<dbReference type="CTD" id="27010"/>
<dbReference type="VEuPathDB" id="HostDB:ENSBTAG00000017676"/>
<dbReference type="VGNC" id="VGNC:36251">
    <property type="gene designation" value="TPK1"/>
</dbReference>
<dbReference type="eggNOG" id="KOG3153">
    <property type="taxonomic scope" value="Eukaryota"/>
</dbReference>
<dbReference type="GeneTree" id="ENSGT00390000016016"/>
<dbReference type="HOGENOM" id="CLU_044237_0_1_1"/>
<dbReference type="InParanoid" id="Q5E9T4"/>
<dbReference type="OMA" id="TDMCKAL"/>
<dbReference type="OrthoDB" id="25149at2759"/>
<dbReference type="TreeFam" id="TF313224"/>
<dbReference type="Reactome" id="R-BTA-196819">
    <property type="pathway name" value="Vitamin B1 (thiamin) metabolism"/>
</dbReference>
<dbReference type="UniPathway" id="UPA00060">
    <property type="reaction ID" value="UER00597"/>
</dbReference>
<dbReference type="Proteomes" id="UP000009136">
    <property type="component" value="Chromosome 4"/>
</dbReference>
<dbReference type="Bgee" id="ENSBTAG00000017676">
    <property type="expression patterns" value="Expressed in oocyte and 104 other cell types or tissues"/>
</dbReference>
<dbReference type="GO" id="GO:0005524">
    <property type="term" value="F:ATP binding"/>
    <property type="evidence" value="ECO:0007669"/>
    <property type="project" value="UniProtKB-KW"/>
</dbReference>
<dbReference type="GO" id="GO:0016301">
    <property type="term" value="F:kinase activity"/>
    <property type="evidence" value="ECO:0007669"/>
    <property type="project" value="UniProtKB-KW"/>
</dbReference>
<dbReference type="GO" id="GO:0030975">
    <property type="term" value="F:thiamine binding"/>
    <property type="evidence" value="ECO:0007669"/>
    <property type="project" value="InterPro"/>
</dbReference>
<dbReference type="GO" id="GO:0004788">
    <property type="term" value="F:thiamine diphosphokinase activity"/>
    <property type="evidence" value="ECO:0000318"/>
    <property type="project" value="GO_Central"/>
</dbReference>
<dbReference type="GO" id="GO:0141200">
    <property type="term" value="F:UTP thiamine diphosphokinase activity"/>
    <property type="evidence" value="ECO:0000250"/>
    <property type="project" value="UniProtKB"/>
</dbReference>
<dbReference type="GO" id="GO:0009229">
    <property type="term" value="P:thiamine diphosphate biosynthetic process"/>
    <property type="evidence" value="ECO:0000250"/>
    <property type="project" value="UniProtKB"/>
</dbReference>
<dbReference type="GO" id="GO:0006772">
    <property type="term" value="P:thiamine metabolic process"/>
    <property type="evidence" value="ECO:0007669"/>
    <property type="project" value="InterPro"/>
</dbReference>
<dbReference type="CDD" id="cd07995">
    <property type="entry name" value="TPK"/>
    <property type="match status" value="1"/>
</dbReference>
<dbReference type="FunFam" id="3.40.50.10240:FF:000004">
    <property type="entry name" value="Thiamin pyrophosphokinase 1"/>
    <property type="match status" value="1"/>
</dbReference>
<dbReference type="FunFam" id="2.60.120.320:FF:000002">
    <property type="entry name" value="Thiamine pyrophosphokinase"/>
    <property type="match status" value="1"/>
</dbReference>
<dbReference type="Gene3D" id="3.40.50.10240">
    <property type="entry name" value="Thiamin pyrophosphokinase, catalytic domain"/>
    <property type="match status" value="1"/>
</dbReference>
<dbReference type="Gene3D" id="2.60.120.320">
    <property type="entry name" value="Thiamin pyrophosphokinase, thiamin-binding domain"/>
    <property type="match status" value="1"/>
</dbReference>
<dbReference type="InterPro" id="IPR006282">
    <property type="entry name" value="Thi_PPkinase"/>
</dbReference>
<dbReference type="InterPro" id="IPR016966">
    <property type="entry name" value="Thiamin_pyrophosphokinase_euk"/>
</dbReference>
<dbReference type="InterPro" id="IPR007373">
    <property type="entry name" value="Thiamin_PyroPKinase_B1-bd"/>
</dbReference>
<dbReference type="InterPro" id="IPR036371">
    <property type="entry name" value="TPK_B1-bd_sf"/>
</dbReference>
<dbReference type="InterPro" id="IPR007371">
    <property type="entry name" value="TPK_catalytic"/>
</dbReference>
<dbReference type="InterPro" id="IPR036759">
    <property type="entry name" value="TPK_catalytic_sf"/>
</dbReference>
<dbReference type="NCBIfam" id="TIGR01378">
    <property type="entry name" value="thi_PPkinase"/>
    <property type="match status" value="1"/>
</dbReference>
<dbReference type="PANTHER" id="PTHR13622">
    <property type="entry name" value="THIAMIN PYROPHOSPHOKINASE"/>
    <property type="match status" value="1"/>
</dbReference>
<dbReference type="PANTHER" id="PTHR13622:SF8">
    <property type="entry name" value="THIAMIN PYROPHOSPHOKINASE 1"/>
    <property type="match status" value="1"/>
</dbReference>
<dbReference type="Pfam" id="PF04265">
    <property type="entry name" value="TPK_B1_binding"/>
    <property type="match status" value="1"/>
</dbReference>
<dbReference type="Pfam" id="PF04263">
    <property type="entry name" value="TPK_catalytic"/>
    <property type="match status" value="1"/>
</dbReference>
<dbReference type="PIRSF" id="PIRSF031057">
    <property type="entry name" value="Thiamin_pyrophosphokinase"/>
    <property type="match status" value="1"/>
</dbReference>
<dbReference type="SMART" id="SM00983">
    <property type="entry name" value="TPK_B1_binding"/>
    <property type="match status" value="1"/>
</dbReference>
<dbReference type="SUPFAM" id="SSF63999">
    <property type="entry name" value="Thiamin pyrophosphokinase, catalytic domain"/>
    <property type="match status" value="1"/>
</dbReference>
<dbReference type="SUPFAM" id="SSF63862">
    <property type="entry name" value="Thiamin pyrophosphokinase, substrate-binding domain"/>
    <property type="match status" value="1"/>
</dbReference>
<accession>Q5E9T4</accession>
<accession>Q0P5L2</accession>
<comment type="function">
    <text evidence="1">Catalyzes the phosphorylation of thiamine to thiamine pyrophosphate (TPP) utilizing UTP and therefore links the biosynthesis of TPP to pyrimidines metabolism. By producing thiamine pyrophosphate, a cofactor of the mitochondrial pyruvate dehydrogenase indirectly regulates pyruvate oxidation and lipogenesis. Although it can also catalyze thiamine phosphorylation using ATP and CTP in vitro, it does so with significantly lower efficiency and without physiological relevance evidence.</text>
</comment>
<comment type="catalytic activity">
    <reaction evidence="1">
        <text>thiamine + UTP = thiamine diphosphate + UMP + H(+)</text>
        <dbReference type="Rhea" id="RHEA:79423"/>
        <dbReference type="ChEBI" id="CHEBI:15378"/>
        <dbReference type="ChEBI" id="CHEBI:18385"/>
        <dbReference type="ChEBI" id="CHEBI:46398"/>
        <dbReference type="ChEBI" id="CHEBI:57865"/>
        <dbReference type="ChEBI" id="CHEBI:58937"/>
    </reaction>
    <physiologicalReaction direction="left-to-right" evidence="1">
        <dbReference type="Rhea" id="RHEA:79424"/>
    </physiologicalReaction>
</comment>
<comment type="pathway">
    <text evidence="1">Cofactor biosynthesis; thiamine diphosphate biosynthesis; thiamine diphosphate from thiamine: step 1/1.</text>
</comment>
<comment type="subunit">
    <text evidence="1">Homodimer.</text>
</comment>
<comment type="similarity">
    <text evidence="2">Belongs to the thiamine pyrophosphokinase family.</text>
</comment>
<keyword id="KW-0067">ATP-binding</keyword>
<keyword id="KW-0418">Kinase</keyword>
<keyword id="KW-0547">Nucleotide-binding</keyword>
<keyword id="KW-1185">Reference proteome</keyword>
<keyword id="KW-0808">Transferase</keyword>
<reference key="1">
    <citation type="journal article" date="2005" name="BMC Genomics">
        <title>Characterization of 954 bovine full-CDS cDNA sequences.</title>
        <authorList>
            <person name="Harhay G.P."/>
            <person name="Sonstegard T.S."/>
            <person name="Keele J.W."/>
            <person name="Heaton M.P."/>
            <person name="Clawson M.L."/>
            <person name="Snelling W.M."/>
            <person name="Wiedmann R.T."/>
            <person name="Van Tassell C.P."/>
            <person name="Smith T.P.L."/>
        </authorList>
    </citation>
    <scope>NUCLEOTIDE SEQUENCE [LARGE SCALE MRNA]</scope>
</reference>
<reference key="2">
    <citation type="submission" date="2006-08" db="EMBL/GenBank/DDBJ databases">
        <authorList>
            <consortium name="NIH - Mammalian Gene Collection (MGC) project"/>
        </authorList>
    </citation>
    <scope>NUCLEOTIDE SEQUENCE [LARGE SCALE MRNA]</scope>
    <source>
        <strain>Hereford</strain>
        <tissue>Basal ganglia</tissue>
    </source>
</reference>
<protein>
    <recommendedName>
        <fullName evidence="1">Thiamine pyrophosphokinase 1</fullName>
        <ecNumber evidence="1">2.7.6.-</ecNumber>
    </recommendedName>
</protein>
<evidence type="ECO:0000250" key="1">
    <source>
        <dbReference type="UniProtKB" id="Q9H3S4"/>
    </source>
</evidence>
<evidence type="ECO:0000305" key="2"/>
<name>TPK1_BOVIN</name>
<sequence length="243" mass="27028">MEHAITPLDPLLPSGSLKYCLVILNQPLDKCFRHLWHKALLRACADGGANHLYDVTEGERESFLPEFISGDFDSIRPEVREHYAIKGCEIISTPDQDHTDFTKCLEVLQKKIEEKDLQVDMIVTLGGLAGRFDQIMASVSTLFQAPQITSLPVIIIQEESLIYLLQPGKHKLHVDTGMEGDWCGLIPVGQPCNQVTTTGLKWNLTHQMLGFGTLVSTSNTYDGSGVVTVETDHPLLWTMAIKN</sequence>
<proteinExistence type="evidence at transcript level"/>
<feature type="chain" id="PRO_0000239117" description="Thiamine pyrophosphokinase 1">
    <location>
        <begin position="1"/>
        <end position="243"/>
    </location>
</feature>
<organism>
    <name type="scientific">Bos taurus</name>
    <name type="common">Bovine</name>
    <dbReference type="NCBI Taxonomy" id="9913"/>
    <lineage>
        <taxon>Eukaryota</taxon>
        <taxon>Metazoa</taxon>
        <taxon>Chordata</taxon>
        <taxon>Craniata</taxon>
        <taxon>Vertebrata</taxon>
        <taxon>Euteleostomi</taxon>
        <taxon>Mammalia</taxon>
        <taxon>Eutheria</taxon>
        <taxon>Laurasiatheria</taxon>
        <taxon>Artiodactyla</taxon>
        <taxon>Ruminantia</taxon>
        <taxon>Pecora</taxon>
        <taxon>Bovidae</taxon>
        <taxon>Bovinae</taxon>
        <taxon>Bos</taxon>
    </lineage>
</organism>